<evidence type="ECO:0000255" key="1"/>
<evidence type="ECO:0000305" key="2"/>
<organism>
    <name type="scientific">Xenopus laevis</name>
    <name type="common">African clawed frog</name>
    <dbReference type="NCBI Taxonomy" id="8355"/>
    <lineage>
        <taxon>Eukaryota</taxon>
        <taxon>Metazoa</taxon>
        <taxon>Chordata</taxon>
        <taxon>Craniata</taxon>
        <taxon>Vertebrata</taxon>
        <taxon>Euteleostomi</taxon>
        <taxon>Amphibia</taxon>
        <taxon>Batrachia</taxon>
        <taxon>Anura</taxon>
        <taxon>Pipoidea</taxon>
        <taxon>Pipidae</taxon>
        <taxon>Xenopodinae</taxon>
        <taxon>Xenopus</taxon>
        <taxon>Xenopus</taxon>
    </lineage>
</organism>
<protein>
    <recommendedName>
        <fullName>Apoptosis regulator R11</fullName>
    </recommendedName>
    <alternativeName>
        <fullName>XR11</fullName>
    </alternativeName>
</protein>
<feature type="chain" id="PRO_0000143099" description="Apoptosis regulator R11">
    <location>
        <begin position="1"/>
        <end position="204"/>
    </location>
</feature>
<feature type="transmembrane region" description="Helical" evidence="1">
    <location>
        <begin position="181"/>
        <end position="198"/>
    </location>
</feature>
<feature type="short sequence motif" description="BH1">
    <location>
        <begin position="101"/>
        <end position="120"/>
    </location>
</feature>
<feature type="short sequence motif" description="BH2">
    <location>
        <begin position="152"/>
        <end position="167"/>
    </location>
</feature>
<accession>Q91828</accession>
<sequence>MEGSSRDLVEKFVSKKLSQNEACRKFSNNPNPMPYLMEPSTSERPGEGATQGIVEEEVLQALLEATEEFELRYQRAFSDLTSQLHITQDTAQQSFQQVMGELFRDGTNWGRIVAFFSFGRALCVESANKEMTDLLPRIVQWMVNYLEHTLQPWMQENGGWEAFVGLYGKNAAAQSRESQERFGRLLTIVMLTGVFALVCYMRRR</sequence>
<reference key="1">
    <citation type="journal article" date="1995" name="Gene">
        <title>Cloning, characterization and expression of two Xenopus bcl-2-like cell-survival genes.</title>
        <authorList>
            <person name="Cruz-Reyes J."/>
            <person name="Tata J.R."/>
        </authorList>
    </citation>
    <scope>NUCLEOTIDE SEQUENCE [MRNA]</scope>
    <source>
        <tissue>Head</tissue>
    </source>
</reference>
<name>AR11_XENLA</name>
<keyword id="KW-0053">Apoptosis</keyword>
<keyword id="KW-0472">Membrane</keyword>
<keyword id="KW-1185">Reference proteome</keyword>
<keyword id="KW-0812">Transmembrane</keyword>
<keyword id="KW-1133">Transmembrane helix</keyword>
<proteinExistence type="evidence at transcript level"/>
<dbReference type="EMBL" id="X82461">
    <property type="protein sequence ID" value="CAA57844.1"/>
    <property type="molecule type" value="mRNA"/>
</dbReference>
<dbReference type="SMR" id="Q91828"/>
<dbReference type="AGR" id="Xenbase:XB-GENE-6251803"/>
<dbReference type="Xenbase" id="XB-GENE-6251803">
    <property type="gene designation" value="bcl2l1.S"/>
</dbReference>
<dbReference type="Proteomes" id="UP000186698">
    <property type="component" value="Unplaced"/>
</dbReference>
<dbReference type="GO" id="GO:0005741">
    <property type="term" value="C:mitochondrial outer membrane"/>
    <property type="evidence" value="ECO:0000318"/>
    <property type="project" value="GO_Central"/>
</dbReference>
<dbReference type="GO" id="GO:0051400">
    <property type="term" value="F:BH domain binding"/>
    <property type="evidence" value="ECO:0007669"/>
    <property type="project" value="TreeGrafter"/>
</dbReference>
<dbReference type="GO" id="GO:0015267">
    <property type="term" value="F:channel activity"/>
    <property type="evidence" value="ECO:0000318"/>
    <property type="project" value="GO_Central"/>
</dbReference>
<dbReference type="GO" id="GO:0097192">
    <property type="term" value="P:extrinsic apoptotic signaling pathway in absence of ligand"/>
    <property type="evidence" value="ECO:0000318"/>
    <property type="project" value="GO_Central"/>
</dbReference>
<dbReference type="GO" id="GO:0008630">
    <property type="term" value="P:intrinsic apoptotic signaling pathway in response to DNA damage"/>
    <property type="evidence" value="ECO:0000318"/>
    <property type="project" value="GO_Central"/>
</dbReference>
<dbReference type="GO" id="GO:0043065">
    <property type="term" value="P:positive regulation of apoptotic process"/>
    <property type="evidence" value="ECO:0000318"/>
    <property type="project" value="GO_Central"/>
</dbReference>
<dbReference type="GO" id="GO:0001836">
    <property type="term" value="P:release of cytochrome c from mitochondria"/>
    <property type="evidence" value="ECO:0000318"/>
    <property type="project" value="GO_Central"/>
</dbReference>
<dbReference type="CDD" id="cd06845">
    <property type="entry name" value="Bcl-2_like"/>
    <property type="match status" value="1"/>
</dbReference>
<dbReference type="Gene3D" id="1.10.437.10">
    <property type="entry name" value="Blc2-like"/>
    <property type="match status" value="1"/>
</dbReference>
<dbReference type="InterPro" id="IPR013279">
    <property type="entry name" value="Apop_reg_BclX"/>
</dbReference>
<dbReference type="InterPro" id="IPR036834">
    <property type="entry name" value="Bcl-2-like_sf"/>
</dbReference>
<dbReference type="InterPro" id="IPR046371">
    <property type="entry name" value="Bcl-2_BH1-3"/>
</dbReference>
<dbReference type="InterPro" id="IPR026298">
    <property type="entry name" value="Bcl-2_fam"/>
</dbReference>
<dbReference type="InterPro" id="IPR002475">
    <property type="entry name" value="Bcl2-like"/>
</dbReference>
<dbReference type="InterPro" id="IPR004725">
    <property type="entry name" value="Bcl2/BclX"/>
</dbReference>
<dbReference type="InterPro" id="IPR020717">
    <property type="entry name" value="Bcl2_BH1_motif_CS"/>
</dbReference>
<dbReference type="InterPro" id="IPR020726">
    <property type="entry name" value="Bcl2_BH2_motif_CS"/>
</dbReference>
<dbReference type="InterPro" id="IPR003093">
    <property type="entry name" value="Bcl2_BH4"/>
</dbReference>
<dbReference type="NCBIfam" id="TIGR00865">
    <property type="entry name" value="bcl-2"/>
    <property type="match status" value="1"/>
</dbReference>
<dbReference type="PANTHER" id="PTHR11256">
    <property type="entry name" value="BCL-2 RELATED"/>
    <property type="match status" value="1"/>
</dbReference>
<dbReference type="PANTHER" id="PTHR11256:SF12">
    <property type="entry name" value="BCL-2-LIKE PROTEIN 1"/>
    <property type="match status" value="1"/>
</dbReference>
<dbReference type="Pfam" id="PF00452">
    <property type="entry name" value="Bcl-2"/>
    <property type="match status" value="1"/>
</dbReference>
<dbReference type="PRINTS" id="PR01864">
    <property type="entry name" value="APOPREGBCLX"/>
</dbReference>
<dbReference type="PRINTS" id="PR01862">
    <property type="entry name" value="BCL2FAMILY"/>
</dbReference>
<dbReference type="SMART" id="SM00337">
    <property type="entry name" value="BCL"/>
    <property type="match status" value="1"/>
</dbReference>
<dbReference type="SMART" id="SM00265">
    <property type="entry name" value="BH4"/>
    <property type="match status" value="1"/>
</dbReference>
<dbReference type="SUPFAM" id="SSF56854">
    <property type="entry name" value="Bcl-2 inhibitors of programmed cell death"/>
    <property type="match status" value="1"/>
</dbReference>
<dbReference type="PROSITE" id="PS50062">
    <property type="entry name" value="BCL2_FAMILY"/>
    <property type="match status" value="1"/>
</dbReference>
<dbReference type="PROSITE" id="PS01080">
    <property type="entry name" value="BH1"/>
    <property type="match status" value="1"/>
</dbReference>
<dbReference type="PROSITE" id="PS01258">
    <property type="entry name" value="BH2"/>
    <property type="match status" value="1"/>
</dbReference>
<comment type="function">
    <text>Confers strong protection against cell death.</text>
</comment>
<comment type="subcellular location">
    <subcellularLocation>
        <location evidence="2">Membrane</location>
        <topology evidence="2">Single-pass membrane protein</topology>
    </subcellularLocation>
</comment>
<comment type="developmental stage">
    <text>Developmental regulation only occurs in the brain of mid-metamorphosic to post-metamorphosic tadpoles and adults, where an increase of several fold has been observed.</text>
</comment>
<comment type="similarity">
    <text evidence="2">Belongs to the Bcl-2 family.</text>
</comment>